<keyword id="KW-0539">Nucleus</keyword>
<keyword id="KW-1185">Reference proteome</keyword>
<keyword id="KW-0833">Ubl conjugation pathway</keyword>
<reference key="1">
    <citation type="submission" date="1996-07" db="EMBL/GenBank/DDBJ databases">
        <title>Differentially expressed genes in the developing nervous system.</title>
        <authorList>
            <person name="Hannan A.J."/>
            <person name="Henke R.C."/>
            <person name="Jeffrey P.L."/>
        </authorList>
    </citation>
    <scope>NUCLEOTIDE SEQUENCE [MRNA]</scope>
    <source>
        <tissue>Cerebellum</tissue>
    </source>
</reference>
<protein>
    <recommendedName>
        <fullName>Ubiquitin-conjugating enzyme E2 variant 1</fullName>
        <shortName>UEV-1</shortName>
    </recommendedName>
    <alternativeName>
        <fullName>CROC-1B</fullName>
    </alternativeName>
</protein>
<proteinExistence type="evidence at transcript level"/>
<gene>
    <name type="primary">UBE2V1</name>
</gene>
<name>UB2V1_CHICK</name>
<evidence type="ECO:0000250" key="1"/>
<evidence type="ECO:0000250" key="2">
    <source>
        <dbReference type="UniProtKB" id="Q13404"/>
    </source>
</evidence>
<evidence type="ECO:0000255" key="3">
    <source>
        <dbReference type="PROSITE-ProRule" id="PRU00388"/>
    </source>
</evidence>
<evidence type="ECO:0000305" key="4"/>
<comment type="function">
    <text evidence="1 2">Has no ubiquitin ligase activity on its own. The UBE2V1-UBE2N heterodimer catalyzes the synthesis of non-canonical poly-ubiquitin chains that are linked through 'Lys-63'. This type of poly-ubiquitination activates IKK and does not seem to involve protein degradation by the proteasome. Plays a role in the activation of NF-kappa-B. Mediates transcriptional activation of target genes. Plays a role in the control of progress through the cell cycle and differentiation. Plays a role in the error-free DNA repair pathway and contributes to the survival of cells after DNA damage (By similarity). Together with RNF135 and UBE2N, may catalyze the viral RNA-dependent 'Lys-63'-linked polyubiquitination of RIGI to activate the downstream signaling pathway that leads to interferon beta production (By similarity).</text>
</comment>
<comment type="subcellular location">
    <subcellularLocation>
        <location evidence="1">Nucleus</location>
    </subcellularLocation>
    <text evidence="1">Excluded from the nucleolus.</text>
</comment>
<comment type="similarity">
    <text evidence="3">Belongs to the ubiquitin-conjugating enzyme family.</text>
</comment>
<comment type="sequence caution" evidence="4">
    <conflict type="erroneous initiation">
        <sequence resource="EMBL-CDS" id="AAB04629"/>
    </conflict>
</comment>
<dbReference type="EMBL" id="L77699">
    <property type="protein sequence ID" value="AAB04629.1"/>
    <property type="status" value="ALT_INIT"/>
    <property type="molecule type" value="mRNA"/>
</dbReference>
<dbReference type="RefSeq" id="NP_001192026.1">
    <property type="nucleotide sequence ID" value="NM_001205097.2"/>
</dbReference>
<dbReference type="BMRB" id="Q90879"/>
<dbReference type="SMR" id="Q90879"/>
<dbReference type="FunCoup" id="Q90879">
    <property type="interactions" value="3264"/>
</dbReference>
<dbReference type="STRING" id="9031.ENSGALP00000012992"/>
<dbReference type="PaxDb" id="9031-ENSGALP00000012992"/>
<dbReference type="GeneID" id="100538349"/>
<dbReference type="KEGG" id="gga:100538349"/>
<dbReference type="CTD" id="7335"/>
<dbReference type="VEuPathDB" id="HostDB:geneid_100538349"/>
<dbReference type="eggNOG" id="KOG0896">
    <property type="taxonomic scope" value="Eukaryota"/>
</dbReference>
<dbReference type="HOGENOM" id="CLU_063065_3_0_1"/>
<dbReference type="InParanoid" id="Q90879"/>
<dbReference type="OrthoDB" id="6508832at2759"/>
<dbReference type="PhylomeDB" id="Q90879"/>
<dbReference type="Reactome" id="R-GGA-433871">
    <property type="pathway name" value="TRAF6 mediated induction of proinflammatory cytokines"/>
</dbReference>
<dbReference type="PRO" id="PR:Q90879"/>
<dbReference type="Proteomes" id="UP000000539">
    <property type="component" value="Unassembled WGS sequence"/>
</dbReference>
<dbReference type="GO" id="GO:0005634">
    <property type="term" value="C:nucleus"/>
    <property type="evidence" value="ECO:0000318"/>
    <property type="project" value="GO_Central"/>
</dbReference>
<dbReference type="GO" id="GO:0031371">
    <property type="term" value="C:ubiquitin conjugating enzyme complex"/>
    <property type="evidence" value="ECO:0000318"/>
    <property type="project" value="GO_Central"/>
</dbReference>
<dbReference type="GO" id="GO:0006301">
    <property type="term" value="P:postreplication repair"/>
    <property type="evidence" value="ECO:0000318"/>
    <property type="project" value="GO_Central"/>
</dbReference>
<dbReference type="GO" id="GO:0070534">
    <property type="term" value="P:protein K63-linked ubiquitination"/>
    <property type="evidence" value="ECO:0000318"/>
    <property type="project" value="GO_Central"/>
</dbReference>
<dbReference type="CDD" id="cd23807">
    <property type="entry name" value="UEV_UBE2V"/>
    <property type="match status" value="1"/>
</dbReference>
<dbReference type="FunFam" id="3.10.110.10:FF:000012">
    <property type="entry name" value="Ubiquitin-conjugating enzyme E2 variant 2"/>
    <property type="match status" value="1"/>
</dbReference>
<dbReference type="Gene3D" id="3.10.110.10">
    <property type="entry name" value="Ubiquitin Conjugating Enzyme"/>
    <property type="match status" value="1"/>
</dbReference>
<dbReference type="InterPro" id="IPR000608">
    <property type="entry name" value="UBQ-conjugat_E2_core"/>
</dbReference>
<dbReference type="InterPro" id="IPR016135">
    <property type="entry name" value="UBQ-conjugating_enzyme/RWD"/>
</dbReference>
<dbReference type="PANTHER" id="PTHR24068">
    <property type="entry name" value="UBIQUITIN-CONJUGATING ENZYME E2"/>
    <property type="match status" value="1"/>
</dbReference>
<dbReference type="Pfam" id="PF00179">
    <property type="entry name" value="UQ_con"/>
    <property type="match status" value="1"/>
</dbReference>
<dbReference type="SMART" id="SM00212">
    <property type="entry name" value="UBCc"/>
    <property type="match status" value="1"/>
</dbReference>
<dbReference type="SUPFAM" id="SSF54495">
    <property type="entry name" value="UBC-like"/>
    <property type="match status" value="1"/>
</dbReference>
<dbReference type="PROSITE" id="PS50127">
    <property type="entry name" value="UBC_2"/>
    <property type="match status" value="1"/>
</dbReference>
<accession>Q90879</accession>
<feature type="chain" id="PRO_0000292584" description="Ubiquitin-conjugating enzyme E2 variant 1">
    <location>
        <begin position="1"/>
        <end position="145"/>
    </location>
</feature>
<feature type="domain" description="UBC core" evidence="3">
    <location>
        <begin position="10"/>
        <end position="145"/>
    </location>
</feature>
<sequence>MAATTGVKVPRNFRLLEELEEGQKGVGDGTVSWGLEDDEDMTLTRWTGMIIGPPRTIYENRIYSLKIECGPKYPEAPPFVRFVTKINMNGVNSSNGVVDPRAISVLAKWQNSFSIKVVLQELRRLMMSKENMKLPQPPEGQCYSN</sequence>
<organism>
    <name type="scientific">Gallus gallus</name>
    <name type="common">Chicken</name>
    <dbReference type="NCBI Taxonomy" id="9031"/>
    <lineage>
        <taxon>Eukaryota</taxon>
        <taxon>Metazoa</taxon>
        <taxon>Chordata</taxon>
        <taxon>Craniata</taxon>
        <taxon>Vertebrata</taxon>
        <taxon>Euteleostomi</taxon>
        <taxon>Archelosauria</taxon>
        <taxon>Archosauria</taxon>
        <taxon>Dinosauria</taxon>
        <taxon>Saurischia</taxon>
        <taxon>Theropoda</taxon>
        <taxon>Coelurosauria</taxon>
        <taxon>Aves</taxon>
        <taxon>Neognathae</taxon>
        <taxon>Galloanserae</taxon>
        <taxon>Galliformes</taxon>
        <taxon>Phasianidae</taxon>
        <taxon>Phasianinae</taxon>
        <taxon>Gallus</taxon>
    </lineage>
</organism>